<accession>Q88AQ2</accession>
<protein>
    <recommendedName>
        <fullName>Alginate biosynthesis transcriptional regulatory protein AlgB</fullName>
    </recommendedName>
</protein>
<evidence type="ECO:0000250" key="1"/>
<evidence type="ECO:0000255" key="2">
    <source>
        <dbReference type="PROSITE-ProRule" id="PRU00169"/>
    </source>
</evidence>
<evidence type="ECO:0000255" key="3">
    <source>
        <dbReference type="PROSITE-ProRule" id="PRU00193"/>
    </source>
</evidence>
<gene>
    <name type="primary">algB</name>
    <name type="ordered locus">PSPTO_0334</name>
</gene>
<keyword id="KW-0010">Activator</keyword>
<keyword id="KW-0016">Alginate biosynthesis</keyword>
<keyword id="KW-0067">ATP-binding</keyword>
<keyword id="KW-0238">DNA-binding</keyword>
<keyword id="KW-0547">Nucleotide-binding</keyword>
<keyword id="KW-0597">Phosphoprotein</keyword>
<keyword id="KW-1185">Reference proteome</keyword>
<keyword id="KW-0804">Transcription</keyword>
<keyword id="KW-0805">Transcription regulation</keyword>
<keyword id="KW-0902">Two-component regulatory system</keyword>
<dbReference type="EMBL" id="AE016853">
    <property type="protein sequence ID" value="AAO53879.1"/>
    <property type="molecule type" value="Genomic_DNA"/>
</dbReference>
<dbReference type="RefSeq" id="NP_790184.1">
    <property type="nucleotide sequence ID" value="NC_004578.1"/>
</dbReference>
<dbReference type="RefSeq" id="WP_003380235.1">
    <property type="nucleotide sequence ID" value="NC_004578.1"/>
</dbReference>
<dbReference type="SMR" id="Q88AQ2"/>
<dbReference type="STRING" id="223283.PSPTO_0334"/>
<dbReference type="GeneID" id="61792575"/>
<dbReference type="KEGG" id="pst:PSPTO_0334"/>
<dbReference type="PATRIC" id="fig|223283.9.peg.350"/>
<dbReference type="eggNOG" id="COG2204">
    <property type="taxonomic scope" value="Bacteria"/>
</dbReference>
<dbReference type="HOGENOM" id="CLU_000445_0_6_6"/>
<dbReference type="OrthoDB" id="9804019at2"/>
<dbReference type="PhylomeDB" id="Q88AQ2"/>
<dbReference type="UniPathway" id="UPA00286"/>
<dbReference type="Proteomes" id="UP000002515">
    <property type="component" value="Chromosome"/>
</dbReference>
<dbReference type="GO" id="GO:0005524">
    <property type="term" value="F:ATP binding"/>
    <property type="evidence" value="ECO:0007669"/>
    <property type="project" value="UniProtKB-KW"/>
</dbReference>
<dbReference type="GO" id="GO:0016887">
    <property type="term" value="F:ATP hydrolysis activity"/>
    <property type="evidence" value="ECO:0007669"/>
    <property type="project" value="InterPro"/>
</dbReference>
<dbReference type="GO" id="GO:0043565">
    <property type="term" value="F:sequence-specific DNA binding"/>
    <property type="evidence" value="ECO:0007669"/>
    <property type="project" value="InterPro"/>
</dbReference>
<dbReference type="GO" id="GO:0042121">
    <property type="term" value="P:alginic acid biosynthetic process"/>
    <property type="evidence" value="ECO:0007669"/>
    <property type="project" value="UniProtKB-UniPathway"/>
</dbReference>
<dbReference type="GO" id="GO:0000160">
    <property type="term" value="P:phosphorelay signal transduction system"/>
    <property type="evidence" value="ECO:0007669"/>
    <property type="project" value="UniProtKB-KW"/>
</dbReference>
<dbReference type="GO" id="GO:0006355">
    <property type="term" value="P:regulation of DNA-templated transcription"/>
    <property type="evidence" value="ECO:0007669"/>
    <property type="project" value="InterPro"/>
</dbReference>
<dbReference type="CDD" id="cd00009">
    <property type="entry name" value="AAA"/>
    <property type="match status" value="1"/>
</dbReference>
<dbReference type="FunFam" id="3.40.50.2300:FF:000120">
    <property type="entry name" value="Alginate biosynthesis transcriptional regulator AlgB"/>
    <property type="match status" value="1"/>
</dbReference>
<dbReference type="FunFam" id="3.40.50.300:FF:000006">
    <property type="entry name" value="DNA-binding transcriptional regulator NtrC"/>
    <property type="match status" value="1"/>
</dbReference>
<dbReference type="FunFam" id="1.10.8.60:FF:000120">
    <property type="entry name" value="Sigma-54-dependent Fis family transcriptional regulator"/>
    <property type="match status" value="1"/>
</dbReference>
<dbReference type="Gene3D" id="1.10.8.60">
    <property type="match status" value="1"/>
</dbReference>
<dbReference type="Gene3D" id="3.40.50.2300">
    <property type="match status" value="1"/>
</dbReference>
<dbReference type="Gene3D" id="1.10.10.60">
    <property type="entry name" value="Homeodomain-like"/>
    <property type="match status" value="1"/>
</dbReference>
<dbReference type="Gene3D" id="3.40.50.300">
    <property type="entry name" value="P-loop containing nucleotide triphosphate hydrolases"/>
    <property type="match status" value="1"/>
</dbReference>
<dbReference type="InterPro" id="IPR003593">
    <property type="entry name" value="AAA+_ATPase"/>
</dbReference>
<dbReference type="InterPro" id="IPR011006">
    <property type="entry name" value="CheY-like_superfamily"/>
</dbReference>
<dbReference type="InterPro" id="IPR009057">
    <property type="entry name" value="Homeodomain-like_sf"/>
</dbReference>
<dbReference type="InterPro" id="IPR002197">
    <property type="entry name" value="HTH_Fis"/>
</dbReference>
<dbReference type="InterPro" id="IPR027417">
    <property type="entry name" value="P-loop_NTPase"/>
</dbReference>
<dbReference type="InterPro" id="IPR001789">
    <property type="entry name" value="Sig_transdc_resp-reg_receiver"/>
</dbReference>
<dbReference type="InterPro" id="IPR002078">
    <property type="entry name" value="Sigma_54_int"/>
</dbReference>
<dbReference type="InterPro" id="IPR025662">
    <property type="entry name" value="Sigma_54_int_dom_ATP-bd_1"/>
</dbReference>
<dbReference type="InterPro" id="IPR025943">
    <property type="entry name" value="Sigma_54_int_dom_ATP-bd_2"/>
</dbReference>
<dbReference type="InterPro" id="IPR025944">
    <property type="entry name" value="Sigma_54_int_dom_CS"/>
</dbReference>
<dbReference type="PANTHER" id="PTHR32071:SF113">
    <property type="entry name" value="ALGINATE BIOSYNTHESIS TRANSCRIPTIONAL REGULATORY PROTEIN ALGB"/>
    <property type="match status" value="1"/>
</dbReference>
<dbReference type="PANTHER" id="PTHR32071">
    <property type="entry name" value="TRANSCRIPTIONAL REGULATORY PROTEIN"/>
    <property type="match status" value="1"/>
</dbReference>
<dbReference type="Pfam" id="PF02954">
    <property type="entry name" value="HTH_8"/>
    <property type="match status" value="1"/>
</dbReference>
<dbReference type="Pfam" id="PF00072">
    <property type="entry name" value="Response_reg"/>
    <property type="match status" value="1"/>
</dbReference>
<dbReference type="Pfam" id="PF00158">
    <property type="entry name" value="Sigma54_activat"/>
    <property type="match status" value="1"/>
</dbReference>
<dbReference type="SMART" id="SM00382">
    <property type="entry name" value="AAA"/>
    <property type="match status" value="1"/>
</dbReference>
<dbReference type="SMART" id="SM00448">
    <property type="entry name" value="REC"/>
    <property type="match status" value="1"/>
</dbReference>
<dbReference type="SUPFAM" id="SSF52172">
    <property type="entry name" value="CheY-like"/>
    <property type="match status" value="1"/>
</dbReference>
<dbReference type="SUPFAM" id="SSF46689">
    <property type="entry name" value="Homeodomain-like"/>
    <property type="match status" value="1"/>
</dbReference>
<dbReference type="SUPFAM" id="SSF52540">
    <property type="entry name" value="P-loop containing nucleoside triphosphate hydrolases"/>
    <property type="match status" value="1"/>
</dbReference>
<dbReference type="PROSITE" id="PS50110">
    <property type="entry name" value="RESPONSE_REGULATORY"/>
    <property type="match status" value="1"/>
</dbReference>
<dbReference type="PROSITE" id="PS00675">
    <property type="entry name" value="SIGMA54_INTERACT_1"/>
    <property type="match status" value="1"/>
</dbReference>
<dbReference type="PROSITE" id="PS00676">
    <property type="entry name" value="SIGMA54_INTERACT_2"/>
    <property type="match status" value="1"/>
</dbReference>
<dbReference type="PROSITE" id="PS00688">
    <property type="entry name" value="SIGMA54_INTERACT_3"/>
    <property type="match status" value="1"/>
</dbReference>
<dbReference type="PROSITE" id="PS50045">
    <property type="entry name" value="SIGMA54_INTERACT_4"/>
    <property type="match status" value="1"/>
</dbReference>
<reference key="1">
    <citation type="journal article" date="2003" name="Proc. Natl. Acad. Sci. U.S.A.">
        <title>The complete genome sequence of the Arabidopsis and tomato pathogen Pseudomonas syringae pv. tomato DC3000.</title>
        <authorList>
            <person name="Buell C.R."/>
            <person name="Joardar V."/>
            <person name="Lindeberg M."/>
            <person name="Selengut J."/>
            <person name="Paulsen I.T."/>
            <person name="Gwinn M.L."/>
            <person name="Dodson R.J."/>
            <person name="DeBoy R.T."/>
            <person name="Durkin A.S."/>
            <person name="Kolonay J.F."/>
            <person name="Madupu R."/>
            <person name="Daugherty S.C."/>
            <person name="Brinkac L.M."/>
            <person name="Beanan M.J."/>
            <person name="Haft D.H."/>
            <person name="Nelson W.C."/>
            <person name="Davidsen T.M."/>
            <person name="Zafar N."/>
            <person name="Zhou L."/>
            <person name="Liu J."/>
            <person name="Yuan Q."/>
            <person name="Khouri H.M."/>
            <person name="Fedorova N.B."/>
            <person name="Tran B."/>
            <person name="Russell D."/>
            <person name="Berry K.J."/>
            <person name="Utterback T.R."/>
            <person name="Van Aken S.E."/>
            <person name="Feldblyum T.V."/>
            <person name="D'Ascenzo M."/>
            <person name="Deng W.-L."/>
            <person name="Ramos A.R."/>
            <person name="Alfano J.R."/>
            <person name="Cartinhour S."/>
            <person name="Chatterjee A.K."/>
            <person name="Delaney T.P."/>
            <person name="Lazarowitz S.G."/>
            <person name="Martin G.B."/>
            <person name="Schneider D.J."/>
            <person name="Tang X."/>
            <person name="Bender C.L."/>
            <person name="White O."/>
            <person name="Fraser C.M."/>
            <person name="Collmer A."/>
        </authorList>
    </citation>
    <scope>NUCLEOTIDE SEQUENCE [LARGE SCALE GENOMIC DNA]</scope>
    <source>
        <strain>ATCC BAA-871 / DC3000</strain>
    </source>
</reference>
<feature type="chain" id="PRO_0000081006" description="Alginate biosynthesis transcriptional regulatory protein AlgB">
    <location>
        <begin position="1"/>
        <end position="448"/>
    </location>
</feature>
<feature type="domain" description="Response regulatory" evidence="2">
    <location>
        <begin position="10"/>
        <end position="124"/>
    </location>
</feature>
<feature type="domain" description="Sigma-54 factor interaction" evidence="3">
    <location>
        <begin position="147"/>
        <end position="376"/>
    </location>
</feature>
<feature type="DNA-binding region" description="H-T-H motif" evidence="1">
    <location>
        <begin position="425"/>
        <end position="444"/>
    </location>
</feature>
<feature type="binding site" evidence="3">
    <location>
        <begin position="175"/>
        <end position="182"/>
    </location>
    <ligand>
        <name>ATP</name>
        <dbReference type="ChEBI" id="CHEBI:30616"/>
    </ligand>
</feature>
<feature type="binding site" evidence="3">
    <location>
        <begin position="238"/>
        <end position="247"/>
    </location>
    <ligand>
        <name>ATP</name>
        <dbReference type="ChEBI" id="CHEBI:30616"/>
    </ligand>
</feature>
<feature type="modified residue" description="4-aspartylphosphate" evidence="2">
    <location>
        <position position="59"/>
    </location>
</feature>
<proteinExistence type="inferred from homology"/>
<organism>
    <name type="scientific">Pseudomonas syringae pv. tomato (strain ATCC BAA-871 / DC3000)</name>
    <dbReference type="NCBI Taxonomy" id="223283"/>
    <lineage>
        <taxon>Bacteria</taxon>
        <taxon>Pseudomonadati</taxon>
        <taxon>Pseudomonadota</taxon>
        <taxon>Gammaproteobacteria</taxon>
        <taxon>Pseudomonadales</taxon>
        <taxon>Pseudomonadaceae</taxon>
        <taxon>Pseudomonas</taxon>
    </lineage>
</organism>
<sequence>MEAATENQGRILLVDDESAILRTFRYCLEDEGYSVATANSAAQADTLMQRQVFDLCFLDLRLGEDNGLDVLAQMRIQAPWMRVVIVTAHSAVDTAVDAIQAGAADYLVKPCSPDQLRLATAKQLEVRQLSARLEALEGEVRKPKDGLDSHSPSMMAILETARQVAVTDANILILGESGTGKGELARAIHGWSKRAKKSCVTINCPSLTAELMESELFGHSRGAFTGASESTLGRVNQADGGTLFLDEIGDFPLTLQPKLLRFIQDKEYERVGDPVTRRADVRILAATNLNLEDMVRSGRFREDLLYRLNVITLHLPALRERSEDILTLADRFLARFVKEYARPARGFSEEARAALLNYRWPGNIRELRNVIERASIICPQERVEVSHLGMAEQPANNAPRVGAALSLDELEKAHIGAVLATSETLDQAAKTLGIDASTLYRKRKQYNL</sequence>
<comment type="function">
    <text>Positive regulator of the alginate biosynthetic gene algD.</text>
</comment>
<comment type="pathway">
    <text>Glycan biosynthesis; alginate biosynthesis [regulation].</text>
</comment>
<name>ALGB_PSESM</name>